<proteinExistence type="evidence at protein level"/>
<feature type="chain" id="PRO_0000457416" description="Sodium/hydrogen exchanger 9">
    <location>
        <begin position="1"/>
        <end position="644"/>
    </location>
</feature>
<feature type="topological domain" description="Lumenal" evidence="8">
    <location>
        <begin position="1"/>
        <end position="20"/>
    </location>
</feature>
<feature type="transmembrane region" description="Helical; Name=1" evidence="4">
    <location>
        <begin position="21"/>
        <end position="41"/>
    </location>
</feature>
<feature type="topological domain" description="Cytoplasmic" evidence="8">
    <location>
        <begin position="42"/>
        <end position="45"/>
    </location>
</feature>
<feature type="transmembrane region" description="Helical; Name=2" evidence="4">
    <location>
        <begin position="46"/>
        <end position="66"/>
    </location>
</feature>
<feature type="topological domain" description="Lumenal" evidence="8">
    <location>
        <begin position="67"/>
        <end position="126"/>
    </location>
</feature>
<feature type="transmembrane region" description="Helical; Name=3" evidence="4">
    <location>
        <begin position="127"/>
        <end position="147"/>
    </location>
</feature>
<feature type="topological domain" description="Cytoplasmic" evidence="8">
    <location>
        <begin position="148"/>
        <end position="164"/>
    </location>
</feature>
<feature type="transmembrane region" description="Helical; Name=4" evidence="4">
    <location>
        <begin position="165"/>
        <end position="185"/>
    </location>
</feature>
<feature type="topological domain" description="Lumenal" evidence="8">
    <location>
        <begin position="186"/>
        <end position="203"/>
    </location>
</feature>
<feature type="transmembrane region" description="Helical; Name=5" evidence="4">
    <location>
        <begin position="204"/>
        <end position="224"/>
    </location>
</feature>
<feature type="topological domain" description="Cytoplasmic" evidence="8">
    <location>
        <begin position="225"/>
        <end position="235"/>
    </location>
</feature>
<feature type="transmembrane region" description="Helical; Name=6" evidence="4">
    <location>
        <begin position="236"/>
        <end position="256"/>
    </location>
</feature>
<feature type="topological domain" description="Lumenal" evidence="8">
    <location>
        <begin position="257"/>
        <end position="277"/>
    </location>
</feature>
<feature type="transmembrane region" description="Helical; Name=7" evidence="4">
    <location>
        <begin position="278"/>
        <end position="298"/>
    </location>
</feature>
<feature type="topological domain" description="Cytoplasmic" evidence="8">
    <location>
        <begin position="299"/>
        <end position="301"/>
    </location>
</feature>
<feature type="transmembrane region" description="Helical; Name=8" evidence="4">
    <location>
        <begin position="302"/>
        <end position="322"/>
    </location>
</feature>
<feature type="transmembrane region" description="Helical; Name=9" evidence="4">
    <location>
        <begin position="323"/>
        <end position="343"/>
    </location>
</feature>
<feature type="topological domain" description="Cytoplasmic" evidence="8">
    <location>
        <begin position="344"/>
        <end position="364"/>
    </location>
</feature>
<feature type="transmembrane region" description="Helical; Name=100" evidence="4">
    <location>
        <begin position="365"/>
        <end position="385"/>
    </location>
</feature>
<feature type="topological domain" description="Lumenal" evidence="8">
    <location>
        <position position="386"/>
    </location>
</feature>
<feature type="transmembrane region" description="Helical; Name=11" evidence="4">
    <location>
        <begin position="387"/>
        <end position="407"/>
    </location>
</feature>
<feature type="topological domain" description="Cytoplasmic" evidence="8">
    <location>
        <begin position="408"/>
        <end position="429"/>
    </location>
</feature>
<feature type="transmembrane region" description="Helical; Name=12" evidence="4">
    <location>
        <begin position="430"/>
        <end position="450"/>
    </location>
</feature>
<feature type="topological domain" description="Lumenal" evidence="8">
    <location>
        <begin position="451"/>
        <end position="465"/>
    </location>
</feature>
<feature type="transmembrane region" description="Helical; Name=13" evidence="4">
    <location>
        <begin position="466"/>
        <end position="486"/>
    </location>
</feature>
<feature type="topological domain" description="Cytoplasmic" evidence="8">
    <location>
        <begin position="487"/>
        <end position="644"/>
    </location>
</feature>
<feature type="region of interest" description="Disordered" evidence="5">
    <location>
        <begin position="593"/>
        <end position="622"/>
    </location>
</feature>
<feature type="mutagenesis site" description="Decreases H(+) efflux; when associated with A-244." evidence="6">
    <original>N</original>
    <variation>A</variation>
    <location>
        <position position="243"/>
    </location>
</feature>
<feature type="mutagenesis site" description="Decreases H(+) efflux; when associated with A-243." evidence="6">
    <original>D</original>
    <variation>A</variation>
    <location>
        <position position="244"/>
    </location>
</feature>
<feature type="helix" evidence="9">
    <location>
        <begin position="26"/>
        <end position="43"/>
    </location>
</feature>
<feature type="strand" evidence="9">
    <location>
        <begin position="45"/>
        <end position="47"/>
    </location>
</feature>
<feature type="helix" evidence="9">
    <location>
        <begin position="55"/>
        <end position="59"/>
    </location>
</feature>
<feature type="helix" evidence="9">
    <location>
        <begin position="61"/>
        <end position="65"/>
    </location>
</feature>
<feature type="helix" evidence="9">
    <location>
        <begin position="126"/>
        <end position="128"/>
    </location>
</feature>
<feature type="helix" evidence="9">
    <location>
        <begin position="132"/>
        <end position="135"/>
    </location>
</feature>
<feature type="helix" evidence="9">
    <location>
        <begin position="140"/>
        <end position="148"/>
    </location>
</feature>
<feature type="strand" evidence="9">
    <location>
        <begin position="152"/>
        <end position="154"/>
    </location>
</feature>
<feature type="turn" evidence="9">
    <location>
        <begin position="155"/>
        <end position="158"/>
    </location>
</feature>
<feature type="helix" evidence="9">
    <location>
        <begin position="159"/>
        <end position="164"/>
    </location>
</feature>
<feature type="helix" evidence="9">
    <location>
        <begin position="166"/>
        <end position="187"/>
    </location>
</feature>
<feature type="helix" evidence="9">
    <location>
        <begin position="202"/>
        <end position="210"/>
    </location>
</feature>
<feature type="helix" evidence="9">
    <location>
        <begin position="217"/>
        <end position="226"/>
    </location>
</feature>
<feature type="helix" evidence="9">
    <location>
        <begin position="230"/>
        <end position="255"/>
    </location>
</feature>
<feature type="helix" evidence="9">
    <location>
        <begin position="271"/>
        <end position="302"/>
    </location>
</feature>
<feature type="helix" evidence="9">
    <location>
        <begin position="309"/>
        <end position="330"/>
    </location>
</feature>
<feature type="helix" evidence="9">
    <location>
        <begin position="335"/>
        <end position="340"/>
    </location>
</feature>
<feature type="helix" evidence="9">
    <location>
        <begin position="343"/>
        <end position="352"/>
    </location>
</feature>
<feature type="helix" evidence="9">
    <location>
        <begin position="357"/>
        <end position="370"/>
    </location>
</feature>
<feature type="helix" evidence="9">
    <location>
        <begin position="372"/>
        <end position="384"/>
    </location>
</feature>
<feature type="turn" evidence="9">
    <location>
        <begin position="387"/>
        <end position="390"/>
    </location>
</feature>
<feature type="helix" evidence="9">
    <location>
        <begin position="397"/>
        <end position="409"/>
    </location>
</feature>
<feature type="turn" evidence="9">
    <location>
        <begin position="410"/>
        <end position="412"/>
    </location>
</feature>
<feature type="helix" evidence="9">
    <location>
        <begin position="413"/>
        <end position="421"/>
    </location>
</feature>
<feature type="helix" evidence="9">
    <location>
        <begin position="429"/>
        <end position="431"/>
    </location>
</feature>
<feature type="helix" evidence="9">
    <location>
        <begin position="433"/>
        <end position="437"/>
    </location>
</feature>
<feature type="helix" evidence="9">
    <location>
        <begin position="445"/>
        <end position="449"/>
    </location>
</feature>
<feature type="strand" evidence="9">
    <location>
        <begin position="451"/>
        <end position="453"/>
    </location>
</feature>
<feature type="helix" evidence="9">
    <location>
        <begin position="459"/>
        <end position="473"/>
    </location>
</feature>
<feature type="helix" evidence="9">
    <location>
        <begin position="475"/>
        <end position="478"/>
    </location>
</feature>
<reference key="1">
    <citation type="journal article" date="2009" name="Science">
        <title>Genome sequence, comparative analysis, and population genetics of the domestic horse.</title>
        <authorList>
            <person name="Wade C.M."/>
            <person name="Giulotto E."/>
            <person name="Sigurdsson S."/>
            <person name="Zoli M."/>
            <person name="Gnerre S."/>
            <person name="Imsland F."/>
            <person name="Lear T.L."/>
            <person name="Adelson D.L."/>
            <person name="Bailey E."/>
            <person name="Bellone R.R."/>
            <person name="Bloecker H."/>
            <person name="Distl O."/>
            <person name="Edgar R.C."/>
            <person name="Garber M."/>
            <person name="Leeb T."/>
            <person name="Mauceli E."/>
            <person name="MacLeod J.N."/>
            <person name="Penedo M.C.T."/>
            <person name="Raison J.M."/>
            <person name="Sharpe T."/>
            <person name="Vogel J."/>
            <person name="Andersson L."/>
            <person name="Antczak D.F."/>
            <person name="Biagi T."/>
            <person name="Binns M.M."/>
            <person name="Chowdhary B.P."/>
            <person name="Coleman S.J."/>
            <person name="Della Valle G."/>
            <person name="Fryc S."/>
            <person name="Guerin G."/>
            <person name="Hasegawa T."/>
            <person name="Hill E.W."/>
            <person name="Jurka J."/>
            <person name="Kiialainen A."/>
            <person name="Lindgren G."/>
            <person name="Liu J."/>
            <person name="Magnani E."/>
            <person name="Mickelson J.R."/>
            <person name="Murray J."/>
            <person name="Nergadze S.G."/>
            <person name="Onofrio R."/>
            <person name="Pedroni S."/>
            <person name="Piras M.F."/>
            <person name="Raudsepp T."/>
            <person name="Rocchi M."/>
            <person name="Roeed K.H."/>
            <person name="Ryder O.A."/>
            <person name="Searle S."/>
            <person name="Skow L."/>
            <person name="Swinburne J.E."/>
            <person name="Syvaenen A.C."/>
            <person name="Tozaki T."/>
            <person name="Valberg S.J."/>
            <person name="Vaudin M."/>
            <person name="White J.R."/>
            <person name="Zody M.C."/>
            <person name="Lander E.S."/>
            <person name="Lindblad-Toh K."/>
        </authorList>
    </citation>
    <scope>NUCLEOTIDE SEQUENCE [LARGE SCALE GENOMIC DNA]</scope>
    <source>
        <strain>Thoroughbred</strain>
    </source>
</reference>
<reference key="2">
    <citation type="journal article" date="2020" name="EMBO J.">
        <title>Structure and elevator mechanism of the mammalian sodium/proton exchanger NHE9.</title>
        <authorList>
            <person name="Winkelmann I."/>
            <person name="Matsuoka R."/>
            <person name="Meier P.F."/>
            <person name="Shutin D."/>
            <person name="Zhang C."/>
            <person name="Orellana L."/>
            <person name="Sexton R."/>
            <person name="Landreh M."/>
            <person name="Robinson C.V."/>
            <person name="Beckstein O."/>
            <person name="Drew D."/>
        </authorList>
    </citation>
    <scope>STRUCTURE BY ELECTRON MICROSCOPY (3.19 ANGSTROMS) OF 20-481</scope>
    <scope>SUBUNIT</scope>
    <scope>MUTAGENESIS OF ASN-243 AND ASP-244</scope>
    <scope>FUNCTION</scope>
    <scope>TRANSPORTER ACTIVITY</scope>
    <scope>BIOPHYSICOCHEMICAL PROPERTIES</scope>
    <scope>TOPOLOGY</scope>
</reference>
<comment type="function">
    <text evidence="2 3 6">Endosomal Na(+), K(+)/H(+) antiporter. Mediates the electroneutral exchange of endosomal luminal H(+) for a cytosolic Na(+) or K(+) (PubMed:33118634). By facilitating proton efflux, SLC9A9 counteracts the acidity generated by vacuolar (V)-ATPase, thereby limiting luminal acidification. Regulates organellar pH and consequently, endosome maturation and endocytic trafficking of plasma membrane receptors and neurotransporters (By similarity). Promotes the recycling of transferrin receptors back to the cell surface to facilitate additional iron uptake in the brain (By similarity). Regulates synaptic transmission by regulating the luminal pH of axonal endosomes. Regulates phagosome lumenal pH, thus affecting phagosome maturation, and consequently, microbicidal activity in macrophages. Can also be active at the cell surface of specialized cells, e.g., in the inner ear hair bundles uses the high K(+) of the endolymph to regulate intracelular pH (By similarity).</text>
</comment>
<comment type="catalytic activity">
    <reaction evidence="6">
        <text>Na(+)(in) + H(+)(out) = Na(+)(out) + H(+)(in)</text>
        <dbReference type="Rhea" id="RHEA:29419"/>
        <dbReference type="ChEBI" id="CHEBI:15378"/>
        <dbReference type="ChEBI" id="CHEBI:29101"/>
    </reaction>
</comment>
<comment type="catalytic activity">
    <reaction evidence="2">
        <text>K(+)(in) + H(+)(out) = K(+)(out) + H(+)(in)</text>
        <dbReference type="Rhea" id="RHEA:29467"/>
        <dbReference type="ChEBI" id="CHEBI:15378"/>
        <dbReference type="ChEBI" id="CHEBI:29103"/>
    </reaction>
</comment>
<comment type="biophysicochemical properties">
    <kinetics>
        <KM evidence="6">20.5 mM for Na(+)</KM>
    </kinetics>
</comment>
<comment type="subunit">
    <text evidence="1 3 6">Homodimer; phosphatidylinositol-4,5-bisphosphate (PIP2) and phosphatidylinositol 3,4,5-trisphosphate (PIP3) could be involved in the dimer stabilization (PubMed:33118634). Interacts (via the C-terminus) with RACK1 (By similarity). Interacts with CHP1 (By similarity).</text>
</comment>
<comment type="subcellular location">
    <subcellularLocation>
        <location evidence="3">Late endosome membrane</location>
        <topology evidence="6">Multi-pass membrane protein</topology>
    </subcellularLocation>
    <subcellularLocation>
        <location evidence="3">Early endosome membrane</location>
        <topology evidence="6">Multi-pass membrane protein</topology>
    </subcellularLocation>
    <subcellularLocation>
        <location evidence="3">Recycling endosome membrane</location>
        <topology evidence="6">Multi-pass membrane protein</topology>
    </subcellularLocation>
    <subcellularLocation>
        <location evidence="2">Cell membrane</location>
        <topology evidence="6">Multi-pass membrane protein</topology>
    </subcellularLocation>
    <subcellularLocation>
        <location evidence="2">Cytoplasmic vesicle</location>
        <location evidence="2">Phagosome membrane</location>
        <topology evidence="6">Multi-pass membrane protein</topology>
    </subcellularLocation>
    <text evidence="2">Localized to the plasma membrane in inner ear hair cell bundle.</text>
</comment>
<comment type="similarity">
    <text evidence="7">Belongs to the monovalent cation:proton antiporter 1 (CPA1) transporter (TC 2.A.36) family.</text>
</comment>
<evidence type="ECO:0000250" key="1">
    <source>
        <dbReference type="UniProtKB" id="D4A7H1"/>
    </source>
</evidence>
<evidence type="ECO:0000250" key="2">
    <source>
        <dbReference type="UniProtKB" id="Q8BZ00"/>
    </source>
</evidence>
<evidence type="ECO:0000250" key="3">
    <source>
        <dbReference type="UniProtKB" id="Q8IVB4"/>
    </source>
</evidence>
<evidence type="ECO:0000255" key="4"/>
<evidence type="ECO:0000256" key="5">
    <source>
        <dbReference type="SAM" id="MobiDB-lite"/>
    </source>
</evidence>
<evidence type="ECO:0000269" key="6">
    <source>
    </source>
</evidence>
<evidence type="ECO:0000305" key="7"/>
<evidence type="ECO:0000305" key="8">
    <source>
    </source>
</evidence>
<evidence type="ECO:0007829" key="9">
    <source>
        <dbReference type="PDB" id="6Z3Z"/>
    </source>
</evidence>
<gene>
    <name type="primary">SLC9A9</name>
    <name type="synonym">NHE9</name>
</gene>
<sequence>MERQRRFMSEKDEYQFQHQGAVELLVFNFLLILTILTIWLFKNHRFRFLHETGGAMVYGLIMGLILRYATAPTDIESGTVYDCGKLAFSPSTLLINITDQVYEYKYKREISQHNINPHLGNAILEKMTFDPEIFFNVLLPPIIFHAGYSLKKRHFFQNLGSILTYAFLGTAISCIVIGLIMYGFVKAMVYAGQLKNGDFHFTDCLFFGSLMSATDPVTVLAIFHELHVDPDLYTLLFGESVLNDAVAIVLTYSISIYSPKENPNAFDAAAFFQSVGNFLGIFAGSFAMGSAYAVVTALLTKFTKLCEFPMLETGLFFLLSWSAFLSAEAAGLTGIVAVLFCGVTQAHYTYNNLSLDSKMRTKQLFEFMNFLAENVIFCYMGLALFTFQNHIFNALFILGAFLAIFVARACNIYPLSFLLNLGRKHKIPWNFQHMMMFSGLRGAIAFALAIRDTESQPKQMMFSTTLLLVFFTVWVFGGGTTPMLTWLQIRVGVDLDEDLKERPSSHQEANNLEKSTTKTESAWLFRMWYGFDHKYLKPILTHSGPPLTTTLPEWCGPISRLLTSPQAYGEQLKEDDAECIVNQDELAMNYQEQAASPCSPPTRLGLDQKAAPQTPGKENIYEGDLGLGGYELKLEQTPGQSQLN</sequence>
<protein>
    <recommendedName>
        <fullName>Sodium/hydrogen exchanger 9</fullName>
    </recommendedName>
    <alternativeName>
        <fullName>Na(+)/H(+) exchanger 9</fullName>
        <shortName>NHE-9</shortName>
    </alternativeName>
    <alternativeName>
        <fullName>Sodium/hydrogen exchanger</fullName>
    </alternativeName>
    <alternativeName>
        <fullName>Solute carrier family 9 member 9</fullName>
    </alternativeName>
</protein>
<dbReference type="RefSeq" id="NP_001421604.1">
    <property type="nucleotide sequence ID" value="NM_001434675.1"/>
</dbReference>
<dbReference type="PDB" id="6Z3Y">
    <property type="method" value="EM"/>
    <property type="resolution" value="3.51 A"/>
    <property type="chains" value="A/B=20-489"/>
</dbReference>
<dbReference type="PDB" id="6Z3Z">
    <property type="method" value="EM"/>
    <property type="resolution" value="3.19 A"/>
    <property type="chains" value="A/B=20-481"/>
</dbReference>
<dbReference type="PDB" id="8PVR">
    <property type="method" value="EM"/>
    <property type="resolution" value="3.06 A"/>
    <property type="chains" value="A/B=8-574"/>
</dbReference>
<dbReference type="PDB" id="8PXB">
    <property type="method" value="EM"/>
    <property type="resolution" value="3.60 A"/>
    <property type="chains" value="A/B=8-576"/>
</dbReference>
<dbReference type="PDBsum" id="6Z3Y"/>
<dbReference type="PDBsum" id="6Z3Z"/>
<dbReference type="PDBsum" id="8PVR"/>
<dbReference type="PDBsum" id="8PXB"/>
<dbReference type="EMDB" id="EMD-11066"/>
<dbReference type="EMDB" id="EMD-11067"/>
<dbReference type="EMDB" id="EMD-17971"/>
<dbReference type="EMDB" id="EMD-18002"/>
<dbReference type="SMR" id="F7B113"/>
<dbReference type="FunCoup" id="F7B113">
    <property type="interactions" value="309"/>
</dbReference>
<dbReference type="STRING" id="9796.ENSECAP00000004663"/>
<dbReference type="PaxDb" id="9796-ENSECAP00000004663"/>
<dbReference type="Ensembl" id="ENSECAT00000126906.1">
    <property type="protein sequence ID" value="ENSECAP00000063551.1"/>
    <property type="gene ID" value="ENSECAG00000006450.3"/>
</dbReference>
<dbReference type="GeneID" id="100051114"/>
<dbReference type="VGNC" id="VGNC:23285">
    <property type="gene designation" value="SLC9A9"/>
</dbReference>
<dbReference type="GeneTree" id="ENSGT00940000160094"/>
<dbReference type="HOGENOM" id="CLU_005912_7_0_1"/>
<dbReference type="InParanoid" id="F7B113"/>
<dbReference type="OMA" id="FVKAMIY"/>
<dbReference type="OrthoDB" id="196264at2759"/>
<dbReference type="TreeFam" id="TF318755"/>
<dbReference type="Proteomes" id="UP000002281">
    <property type="component" value="Chromosome 16"/>
</dbReference>
<dbReference type="Bgee" id="ENSECAG00000006450">
    <property type="expression patterns" value="Expressed in spinal cord and 21 other cell types or tissues"/>
</dbReference>
<dbReference type="GO" id="GO:0031901">
    <property type="term" value="C:early endosome membrane"/>
    <property type="evidence" value="ECO:0007669"/>
    <property type="project" value="UniProtKB-SubCell"/>
</dbReference>
<dbReference type="GO" id="GO:0032009">
    <property type="term" value="C:early phagosome"/>
    <property type="evidence" value="ECO:0007669"/>
    <property type="project" value="Ensembl"/>
</dbReference>
<dbReference type="GO" id="GO:0031902">
    <property type="term" value="C:late endosome membrane"/>
    <property type="evidence" value="ECO:0007669"/>
    <property type="project" value="UniProtKB-SubCell"/>
</dbReference>
<dbReference type="GO" id="GO:0030670">
    <property type="term" value="C:phagocytic vesicle membrane"/>
    <property type="evidence" value="ECO:0007669"/>
    <property type="project" value="UniProtKB-SubCell"/>
</dbReference>
<dbReference type="GO" id="GO:0005886">
    <property type="term" value="C:plasma membrane"/>
    <property type="evidence" value="ECO:0000318"/>
    <property type="project" value="GO_Central"/>
</dbReference>
<dbReference type="GO" id="GO:0055037">
    <property type="term" value="C:recycling endosome"/>
    <property type="evidence" value="ECO:0000318"/>
    <property type="project" value="GO_Central"/>
</dbReference>
<dbReference type="GO" id="GO:0055038">
    <property type="term" value="C:recycling endosome membrane"/>
    <property type="evidence" value="ECO:0007669"/>
    <property type="project" value="UniProtKB-SubCell"/>
</dbReference>
<dbReference type="GO" id="GO:0015386">
    <property type="term" value="F:potassium:proton antiporter activity"/>
    <property type="evidence" value="ECO:0000250"/>
    <property type="project" value="UniProtKB"/>
</dbReference>
<dbReference type="GO" id="GO:0042803">
    <property type="term" value="F:protein homodimerization activity"/>
    <property type="evidence" value="ECO:0000314"/>
    <property type="project" value="UniProtKB"/>
</dbReference>
<dbReference type="GO" id="GO:0015385">
    <property type="term" value="F:sodium:proton antiporter activity"/>
    <property type="evidence" value="ECO:0000314"/>
    <property type="project" value="UniProtKB"/>
</dbReference>
<dbReference type="GO" id="GO:0042742">
    <property type="term" value="P:defense response to bacterium"/>
    <property type="evidence" value="ECO:0007669"/>
    <property type="project" value="Ensembl"/>
</dbReference>
<dbReference type="GO" id="GO:0090382">
    <property type="term" value="P:phagosome maturation"/>
    <property type="evidence" value="ECO:0007669"/>
    <property type="project" value="Ensembl"/>
</dbReference>
<dbReference type="GO" id="GO:0071805">
    <property type="term" value="P:potassium ion transmembrane transport"/>
    <property type="evidence" value="ECO:0000250"/>
    <property type="project" value="UniProtKB"/>
</dbReference>
<dbReference type="GO" id="GO:1902600">
    <property type="term" value="P:proton transmembrane transport"/>
    <property type="evidence" value="ECO:0000314"/>
    <property type="project" value="UniProtKB"/>
</dbReference>
<dbReference type="GO" id="GO:0051453">
    <property type="term" value="P:regulation of intracellular pH"/>
    <property type="evidence" value="ECO:0000314"/>
    <property type="project" value="UniProtKB"/>
</dbReference>
<dbReference type="GO" id="GO:0098719">
    <property type="term" value="P:sodium ion import across plasma membrane"/>
    <property type="evidence" value="ECO:0000318"/>
    <property type="project" value="GO_Central"/>
</dbReference>
<dbReference type="GO" id="GO:0035725">
    <property type="term" value="P:sodium ion transmembrane transport"/>
    <property type="evidence" value="ECO:0000314"/>
    <property type="project" value="UniProtKB"/>
</dbReference>
<dbReference type="Gene3D" id="6.10.140.1330">
    <property type="match status" value="1"/>
</dbReference>
<dbReference type="InterPro" id="IPR018422">
    <property type="entry name" value="Cation/H_exchanger_CPA1"/>
</dbReference>
<dbReference type="InterPro" id="IPR006153">
    <property type="entry name" value="Cation/H_exchanger_TM"/>
</dbReference>
<dbReference type="InterPro" id="IPR004709">
    <property type="entry name" value="NaH_exchanger"/>
</dbReference>
<dbReference type="InterPro" id="IPR002090">
    <property type="entry name" value="NHE-6/7/9"/>
</dbReference>
<dbReference type="NCBIfam" id="TIGR00840">
    <property type="entry name" value="b_cpa1"/>
    <property type="match status" value="1"/>
</dbReference>
<dbReference type="PANTHER" id="PTHR10110">
    <property type="entry name" value="SODIUM/HYDROGEN EXCHANGER"/>
    <property type="match status" value="1"/>
</dbReference>
<dbReference type="PANTHER" id="PTHR10110:SF61">
    <property type="entry name" value="SODIUM_HYDROGEN EXCHANGER 9"/>
    <property type="match status" value="1"/>
</dbReference>
<dbReference type="Pfam" id="PF00999">
    <property type="entry name" value="Na_H_Exchanger"/>
    <property type="match status" value="1"/>
</dbReference>
<dbReference type="PRINTS" id="PR01084">
    <property type="entry name" value="NAHEXCHNGR"/>
</dbReference>
<dbReference type="PRINTS" id="PR01088">
    <property type="entry name" value="NAHEXCHNGR6"/>
</dbReference>
<organism>
    <name type="scientific">Equus caballus</name>
    <name type="common">Horse</name>
    <dbReference type="NCBI Taxonomy" id="9796"/>
    <lineage>
        <taxon>Eukaryota</taxon>
        <taxon>Metazoa</taxon>
        <taxon>Chordata</taxon>
        <taxon>Craniata</taxon>
        <taxon>Vertebrata</taxon>
        <taxon>Euteleostomi</taxon>
        <taxon>Mammalia</taxon>
        <taxon>Eutheria</taxon>
        <taxon>Laurasiatheria</taxon>
        <taxon>Perissodactyla</taxon>
        <taxon>Equidae</taxon>
        <taxon>Equus</taxon>
    </lineage>
</organism>
<accession>F7B113</accession>
<name>SL9A9_HORSE</name>
<keyword id="KW-0002">3D-structure</keyword>
<keyword id="KW-0050">Antiport</keyword>
<keyword id="KW-1003">Cell membrane</keyword>
<keyword id="KW-0968">Cytoplasmic vesicle</keyword>
<keyword id="KW-0967">Endosome</keyword>
<keyword id="KW-0406">Ion transport</keyword>
<keyword id="KW-0472">Membrane</keyword>
<keyword id="KW-1185">Reference proteome</keyword>
<keyword id="KW-0915">Sodium</keyword>
<keyword id="KW-0739">Sodium transport</keyword>
<keyword id="KW-0812">Transmembrane</keyword>
<keyword id="KW-1133">Transmembrane helix</keyword>
<keyword id="KW-0813">Transport</keyword>